<name>GLYM1_FLAPR</name>
<reference key="1">
    <citation type="online journal article" date="1998" name="Plant Gene Register">
        <title>Cloning and sequencing of two isoforms of serine hydroxymethyltransferase from Flaveria pringlei.</title>
        <authorList>
            <person name="Kopriva S."/>
            <person name="Bauwe H."/>
        </authorList>
        <locator>PGR98-051</locator>
    </citation>
    <scope>NUCLEOTIDE SEQUENCE [MRNA]</scope>
    <source>
        <tissue>Leaf</tissue>
    </source>
</reference>
<evidence type="ECO:0000250" key="1"/>
<evidence type="ECO:0000305" key="2"/>
<organism>
    <name type="scientific">Flaveria pringlei</name>
    <dbReference type="NCBI Taxonomy" id="4226"/>
    <lineage>
        <taxon>Eukaryota</taxon>
        <taxon>Viridiplantae</taxon>
        <taxon>Streptophyta</taxon>
        <taxon>Embryophyta</taxon>
        <taxon>Tracheophyta</taxon>
        <taxon>Spermatophyta</taxon>
        <taxon>Magnoliopsida</taxon>
        <taxon>eudicotyledons</taxon>
        <taxon>Gunneridae</taxon>
        <taxon>Pentapetalae</taxon>
        <taxon>asterids</taxon>
        <taxon>campanulids</taxon>
        <taxon>Asterales</taxon>
        <taxon>Asteraceae</taxon>
        <taxon>Asteroideae</taxon>
        <taxon>Heliantheae alliance</taxon>
        <taxon>Tageteae</taxon>
        <taxon>Flaveria</taxon>
    </lineage>
</organism>
<keyword id="KW-0496">Mitochondrion</keyword>
<keyword id="KW-0554">One-carbon metabolism</keyword>
<keyword id="KW-0663">Pyridoxal phosphate</keyword>
<keyword id="KW-0808">Transferase</keyword>
<keyword id="KW-0809">Transit peptide</keyword>
<protein>
    <recommendedName>
        <fullName>Serine hydroxymethyltransferase 1, mitochondrial</fullName>
        <shortName>SHMT1</shortName>
        <ecNumber>2.1.2.1</ecNumber>
    </recommendedName>
    <alternativeName>
        <fullName>Glycine hydroxymethyltransferase 1</fullName>
    </alternativeName>
    <alternativeName>
        <fullName>Serine methylase 1</fullName>
    </alternativeName>
</protein>
<accession>P49357</accession>
<feature type="transit peptide" description="Mitochondrion" evidence="1">
    <location>
        <begin position="1"/>
        <end position="31"/>
    </location>
</feature>
<feature type="chain" id="PRO_0000032571" description="Serine hydroxymethyltransferase 1, mitochondrial">
    <location>
        <begin position="32"/>
        <end position="517"/>
    </location>
</feature>
<feature type="modified residue" description="N6-(pyridoxal phosphate)lysine" evidence="1">
    <location>
        <position position="287"/>
    </location>
</feature>
<proteinExistence type="evidence at transcript level"/>
<dbReference type="EC" id="2.1.2.1"/>
<dbReference type="EMBL" id="Z25859">
    <property type="protein sequence ID" value="CAA81078.1"/>
    <property type="molecule type" value="mRNA"/>
</dbReference>
<dbReference type="PIR" id="S40212">
    <property type="entry name" value="S40212"/>
</dbReference>
<dbReference type="SMR" id="P49357"/>
<dbReference type="UniPathway" id="UPA00193"/>
<dbReference type="GO" id="GO:0005739">
    <property type="term" value="C:mitochondrion"/>
    <property type="evidence" value="ECO:0007669"/>
    <property type="project" value="UniProtKB-SubCell"/>
</dbReference>
<dbReference type="GO" id="GO:0004372">
    <property type="term" value="F:glycine hydroxymethyltransferase activity"/>
    <property type="evidence" value="ECO:0007669"/>
    <property type="project" value="UniProtKB-EC"/>
</dbReference>
<dbReference type="GO" id="GO:0030170">
    <property type="term" value="F:pyridoxal phosphate binding"/>
    <property type="evidence" value="ECO:0007669"/>
    <property type="project" value="InterPro"/>
</dbReference>
<dbReference type="GO" id="GO:0019264">
    <property type="term" value="P:glycine biosynthetic process from serine"/>
    <property type="evidence" value="ECO:0007669"/>
    <property type="project" value="InterPro"/>
</dbReference>
<dbReference type="GO" id="GO:0035999">
    <property type="term" value="P:tetrahydrofolate interconversion"/>
    <property type="evidence" value="ECO:0007669"/>
    <property type="project" value="UniProtKB-UniPathway"/>
</dbReference>
<dbReference type="CDD" id="cd00378">
    <property type="entry name" value="SHMT"/>
    <property type="match status" value="1"/>
</dbReference>
<dbReference type="FunFam" id="3.40.640.10:FF:000050">
    <property type="entry name" value="Serine hydroxymethyltransferase"/>
    <property type="match status" value="1"/>
</dbReference>
<dbReference type="Gene3D" id="3.90.1150.10">
    <property type="entry name" value="Aspartate Aminotransferase, domain 1"/>
    <property type="match status" value="1"/>
</dbReference>
<dbReference type="Gene3D" id="3.40.640.10">
    <property type="entry name" value="Type I PLP-dependent aspartate aminotransferase-like (Major domain)"/>
    <property type="match status" value="1"/>
</dbReference>
<dbReference type="HAMAP" id="MF_00051">
    <property type="entry name" value="SHMT"/>
    <property type="match status" value="1"/>
</dbReference>
<dbReference type="InterPro" id="IPR015424">
    <property type="entry name" value="PyrdxlP-dep_Trfase"/>
</dbReference>
<dbReference type="InterPro" id="IPR015421">
    <property type="entry name" value="PyrdxlP-dep_Trfase_major"/>
</dbReference>
<dbReference type="InterPro" id="IPR015422">
    <property type="entry name" value="PyrdxlP-dep_Trfase_small"/>
</dbReference>
<dbReference type="InterPro" id="IPR001085">
    <property type="entry name" value="Ser_HO-MeTrfase"/>
</dbReference>
<dbReference type="InterPro" id="IPR049943">
    <property type="entry name" value="Ser_HO-MeTrfase-like"/>
</dbReference>
<dbReference type="InterPro" id="IPR019798">
    <property type="entry name" value="Ser_HO-MeTrfase_PLP_BS"/>
</dbReference>
<dbReference type="InterPro" id="IPR039429">
    <property type="entry name" value="SHMT-like_dom"/>
</dbReference>
<dbReference type="NCBIfam" id="NF000586">
    <property type="entry name" value="PRK00011.1"/>
    <property type="match status" value="1"/>
</dbReference>
<dbReference type="PANTHER" id="PTHR11680">
    <property type="entry name" value="SERINE HYDROXYMETHYLTRANSFERASE"/>
    <property type="match status" value="1"/>
</dbReference>
<dbReference type="PANTHER" id="PTHR11680:SF28">
    <property type="entry name" value="SERINE HYDROXYMETHYLTRANSFERASE, MITOCHONDRIAL"/>
    <property type="match status" value="1"/>
</dbReference>
<dbReference type="Pfam" id="PF00464">
    <property type="entry name" value="SHMT"/>
    <property type="match status" value="1"/>
</dbReference>
<dbReference type="PIRSF" id="PIRSF000412">
    <property type="entry name" value="SHMT"/>
    <property type="match status" value="1"/>
</dbReference>
<dbReference type="SUPFAM" id="SSF53383">
    <property type="entry name" value="PLP-dependent transferases"/>
    <property type="match status" value="1"/>
</dbReference>
<dbReference type="PROSITE" id="PS00096">
    <property type="entry name" value="SHMT"/>
    <property type="match status" value="1"/>
</dbReference>
<sequence length="517" mass="57049">MAMALALRRLSSSADKPLQRLFNGGHLYSMSSLPSEAVYEKERPGVTWPKQLNAPLEVVDPEIADIIELEKARQWKGLELIPSENFTSLSVMQAVGSVMTNKYSEGYPGARYYGGNEYIDMAETLCQKRALEAFRLDPAKWGVNVQPLSGSPANFHVYTALLKAHDRIMALDLPHGGHLSHGYQTDTKKISAVSIFFETMPYRLNESTGYIDYDQLEKSATLFRPKLIVAGASAYARLYDYARIRKVCDKQKAIMLADMAHISGLVAAGVIPSPFDYADVVTTTTHKSLRGPRGAMIFFRKGLKEVNKQGKEVFYDYEDKINQAVFPGLQGGPHNHTITGLAVALKQATTAEYKAYQEQVMSNSAKFAETLVKSGYELVSGGTENHLVLVNLKNKGIDGSKVEKVLEAVHIAANKNTVPGDVSAMVPGGIRMGTPALTSRGFVEEDFAKVAYFFDLAVKLAVKIKGEAKGTKLKDFVTAMESSAIQSEISKLRHDVEEYAKQFPTIGFEKETMKYKN</sequence>
<comment type="function">
    <text>Catalyzes the interconversion of serine and glycine.</text>
</comment>
<comment type="catalytic activity">
    <reaction>
        <text>(6R)-5,10-methylene-5,6,7,8-tetrahydrofolate + glycine + H2O = (6S)-5,6,7,8-tetrahydrofolate + L-serine</text>
        <dbReference type="Rhea" id="RHEA:15481"/>
        <dbReference type="ChEBI" id="CHEBI:15377"/>
        <dbReference type="ChEBI" id="CHEBI:15636"/>
        <dbReference type="ChEBI" id="CHEBI:33384"/>
        <dbReference type="ChEBI" id="CHEBI:57305"/>
        <dbReference type="ChEBI" id="CHEBI:57453"/>
        <dbReference type="EC" id="2.1.2.1"/>
    </reaction>
</comment>
<comment type="cofactor">
    <cofactor evidence="1">
        <name>pyridoxal 5'-phosphate</name>
        <dbReference type="ChEBI" id="CHEBI:597326"/>
    </cofactor>
</comment>
<comment type="pathway">
    <text>One-carbon metabolism; tetrahydrofolate interconversion.</text>
</comment>
<comment type="subunit">
    <text evidence="1">Homotetramer.</text>
</comment>
<comment type="subcellular location">
    <subcellularLocation>
        <location>Mitochondrion</location>
    </subcellularLocation>
</comment>
<comment type="similarity">
    <text evidence="2">Belongs to the SHMT family.</text>
</comment>